<dbReference type="EC" id="2.8.1.6" evidence="1"/>
<dbReference type="EMBL" id="BX572599">
    <property type="protein sequence ID" value="CAE27486.1"/>
    <property type="molecule type" value="Genomic_DNA"/>
</dbReference>
<dbReference type="RefSeq" id="WP_011157600.1">
    <property type="nucleotide sequence ID" value="NZ_CP116810.1"/>
</dbReference>
<dbReference type="SMR" id="Q6N859"/>
<dbReference type="STRING" id="258594.RPA2045"/>
<dbReference type="GeneID" id="66893089"/>
<dbReference type="eggNOG" id="COG0502">
    <property type="taxonomic scope" value="Bacteria"/>
</dbReference>
<dbReference type="HOGENOM" id="CLU_033172_1_2_5"/>
<dbReference type="PhylomeDB" id="Q6N859"/>
<dbReference type="UniPathway" id="UPA00078">
    <property type="reaction ID" value="UER00162"/>
</dbReference>
<dbReference type="GO" id="GO:0051537">
    <property type="term" value="F:2 iron, 2 sulfur cluster binding"/>
    <property type="evidence" value="ECO:0007669"/>
    <property type="project" value="UniProtKB-KW"/>
</dbReference>
<dbReference type="GO" id="GO:0051539">
    <property type="term" value="F:4 iron, 4 sulfur cluster binding"/>
    <property type="evidence" value="ECO:0007669"/>
    <property type="project" value="UniProtKB-KW"/>
</dbReference>
<dbReference type="GO" id="GO:0004076">
    <property type="term" value="F:biotin synthase activity"/>
    <property type="evidence" value="ECO:0007669"/>
    <property type="project" value="UniProtKB-UniRule"/>
</dbReference>
<dbReference type="GO" id="GO:0005506">
    <property type="term" value="F:iron ion binding"/>
    <property type="evidence" value="ECO:0007669"/>
    <property type="project" value="UniProtKB-UniRule"/>
</dbReference>
<dbReference type="GO" id="GO:0009102">
    <property type="term" value="P:biotin biosynthetic process"/>
    <property type="evidence" value="ECO:0007669"/>
    <property type="project" value="UniProtKB-UniRule"/>
</dbReference>
<dbReference type="CDD" id="cd01335">
    <property type="entry name" value="Radical_SAM"/>
    <property type="match status" value="1"/>
</dbReference>
<dbReference type="FunFam" id="3.20.20.70:FF:000011">
    <property type="entry name" value="Biotin synthase"/>
    <property type="match status" value="1"/>
</dbReference>
<dbReference type="Gene3D" id="3.20.20.70">
    <property type="entry name" value="Aldolase class I"/>
    <property type="match status" value="1"/>
</dbReference>
<dbReference type="HAMAP" id="MF_01694">
    <property type="entry name" value="BioB"/>
    <property type="match status" value="1"/>
</dbReference>
<dbReference type="InterPro" id="IPR013785">
    <property type="entry name" value="Aldolase_TIM"/>
</dbReference>
<dbReference type="InterPro" id="IPR010722">
    <property type="entry name" value="BATS_dom"/>
</dbReference>
<dbReference type="InterPro" id="IPR002684">
    <property type="entry name" value="Biotin_synth/BioAB"/>
</dbReference>
<dbReference type="InterPro" id="IPR024177">
    <property type="entry name" value="Biotin_synthase"/>
</dbReference>
<dbReference type="InterPro" id="IPR006638">
    <property type="entry name" value="Elp3/MiaA/NifB-like_rSAM"/>
</dbReference>
<dbReference type="InterPro" id="IPR007197">
    <property type="entry name" value="rSAM"/>
</dbReference>
<dbReference type="NCBIfam" id="TIGR00433">
    <property type="entry name" value="bioB"/>
    <property type="match status" value="1"/>
</dbReference>
<dbReference type="PANTHER" id="PTHR22976">
    <property type="entry name" value="BIOTIN SYNTHASE"/>
    <property type="match status" value="1"/>
</dbReference>
<dbReference type="PANTHER" id="PTHR22976:SF2">
    <property type="entry name" value="BIOTIN SYNTHASE, MITOCHONDRIAL"/>
    <property type="match status" value="1"/>
</dbReference>
<dbReference type="Pfam" id="PF06968">
    <property type="entry name" value="BATS"/>
    <property type="match status" value="1"/>
</dbReference>
<dbReference type="Pfam" id="PF04055">
    <property type="entry name" value="Radical_SAM"/>
    <property type="match status" value="1"/>
</dbReference>
<dbReference type="PIRSF" id="PIRSF001619">
    <property type="entry name" value="Biotin_synth"/>
    <property type="match status" value="1"/>
</dbReference>
<dbReference type="SFLD" id="SFLDF00272">
    <property type="entry name" value="biotin_synthase"/>
    <property type="match status" value="1"/>
</dbReference>
<dbReference type="SFLD" id="SFLDS00029">
    <property type="entry name" value="Radical_SAM"/>
    <property type="match status" value="1"/>
</dbReference>
<dbReference type="SMART" id="SM00876">
    <property type="entry name" value="BATS"/>
    <property type="match status" value="1"/>
</dbReference>
<dbReference type="SMART" id="SM00729">
    <property type="entry name" value="Elp3"/>
    <property type="match status" value="1"/>
</dbReference>
<dbReference type="SUPFAM" id="SSF102114">
    <property type="entry name" value="Radical SAM enzymes"/>
    <property type="match status" value="1"/>
</dbReference>
<dbReference type="PROSITE" id="PS51918">
    <property type="entry name" value="RADICAL_SAM"/>
    <property type="match status" value="1"/>
</dbReference>
<evidence type="ECO:0000255" key="1">
    <source>
        <dbReference type="HAMAP-Rule" id="MF_01694"/>
    </source>
</evidence>
<evidence type="ECO:0000255" key="2">
    <source>
        <dbReference type="PROSITE-ProRule" id="PRU01266"/>
    </source>
</evidence>
<feature type="chain" id="PRO_0000381582" description="Biotin synthase">
    <location>
        <begin position="1"/>
        <end position="336"/>
    </location>
</feature>
<feature type="domain" description="Radical SAM core" evidence="2">
    <location>
        <begin position="51"/>
        <end position="270"/>
    </location>
</feature>
<feature type="binding site" evidence="1">
    <location>
        <position position="66"/>
    </location>
    <ligand>
        <name>[4Fe-4S] cluster</name>
        <dbReference type="ChEBI" id="CHEBI:49883"/>
        <note>4Fe-4S-S-AdoMet</note>
    </ligand>
</feature>
<feature type="binding site" evidence="1">
    <location>
        <position position="70"/>
    </location>
    <ligand>
        <name>[4Fe-4S] cluster</name>
        <dbReference type="ChEBI" id="CHEBI:49883"/>
        <note>4Fe-4S-S-AdoMet</note>
    </ligand>
</feature>
<feature type="binding site" evidence="1">
    <location>
        <position position="73"/>
    </location>
    <ligand>
        <name>[4Fe-4S] cluster</name>
        <dbReference type="ChEBI" id="CHEBI:49883"/>
        <note>4Fe-4S-S-AdoMet</note>
    </ligand>
</feature>
<feature type="binding site" evidence="1">
    <location>
        <position position="110"/>
    </location>
    <ligand>
        <name>[2Fe-2S] cluster</name>
        <dbReference type="ChEBI" id="CHEBI:190135"/>
    </ligand>
</feature>
<feature type="binding site" evidence="1">
    <location>
        <position position="141"/>
    </location>
    <ligand>
        <name>[2Fe-2S] cluster</name>
        <dbReference type="ChEBI" id="CHEBI:190135"/>
    </ligand>
</feature>
<feature type="binding site" evidence="1">
    <location>
        <position position="201"/>
    </location>
    <ligand>
        <name>[2Fe-2S] cluster</name>
        <dbReference type="ChEBI" id="CHEBI:190135"/>
    </ligand>
</feature>
<feature type="binding site" evidence="1">
    <location>
        <position position="274"/>
    </location>
    <ligand>
        <name>[2Fe-2S] cluster</name>
        <dbReference type="ChEBI" id="CHEBI:190135"/>
    </ligand>
</feature>
<name>BIOB_RHOPA</name>
<accession>Q6N859</accession>
<gene>
    <name evidence="1" type="primary">bioB</name>
    <name type="ordered locus">RPA2045</name>
</gene>
<reference key="1">
    <citation type="journal article" date="2004" name="Nat. Biotechnol.">
        <title>Complete genome sequence of the metabolically versatile photosynthetic bacterium Rhodopseudomonas palustris.</title>
        <authorList>
            <person name="Larimer F.W."/>
            <person name="Chain P."/>
            <person name="Hauser L."/>
            <person name="Lamerdin J.E."/>
            <person name="Malfatti S."/>
            <person name="Do L."/>
            <person name="Land M.L."/>
            <person name="Pelletier D.A."/>
            <person name="Beatty J.T."/>
            <person name="Lang A.S."/>
            <person name="Tabita F.R."/>
            <person name="Gibson J.L."/>
            <person name="Hanson T.E."/>
            <person name="Bobst C."/>
            <person name="Torres y Torres J.L."/>
            <person name="Peres C."/>
            <person name="Harrison F.H."/>
            <person name="Gibson J."/>
            <person name="Harwood C.S."/>
        </authorList>
    </citation>
    <scope>NUCLEOTIDE SEQUENCE [LARGE SCALE GENOMIC DNA]</scope>
    <source>
        <strain>ATCC BAA-98 / CGA009</strain>
    </source>
</reference>
<organism>
    <name type="scientific">Rhodopseudomonas palustris (strain ATCC BAA-98 / CGA009)</name>
    <dbReference type="NCBI Taxonomy" id="258594"/>
    <lineage>
        <taxon>Bacteria</taxon>
        <taxon>Pseudomonadati</taxon>
        <taxon>Pseudomonadota</taxon>
        <taxon>Alphaproteobacteria</taxon>
        <taxon>Hyphomicrobiales</taxon>
        <taxon>Nitrobacteraceae</taxon>
        <taxon>Rhodopseudomonas</taxon>
    </lineage>
</organism>
<comment type="function">
    <text evidence="1">Catalyzes the conversion of dethiobiotin (DTB) to biotin by the insertion of a sulfur atom into dethiobiotin via a radical-based mechanism.</text>
</comment>
<comment type="catalytic activity">
    <reaction evidence="1">
        <text>(4R,5S)-dethiobiotin + (sulfur carrier)-SH + 2 reduced [2Fe-2S]-[ferredoxin] + 2 S-adenosyl-L-methionine = (sulfur carrier)-H + biotin + 2 5'-deoxyadenosine + 2 L-methionine + 2 oxidized [2Fe-2S]-[ferredoxin]</text>
        <dbReference type="Rhea" id="RHEA:22060"/>
        <dbReference type="Rhea" id="RHEA-COMP:10000"/>
        <dbReference type="Rhea" id="RHEA-COMP:10001"/>
        <dbReference type="Rhea" id="RHEA-COMP:14737"/>
        <dbReference type="Rhea" id="RHEA-COMP:14739"/>
        <dbReference type="ChEBI" id="CHEBI:17319"/>
        <dbReference type="ChEBI" id="CHEBI:29917"/>
        <dbReference type="ChEBI" id="CHEBI:33737"/>
        <dbReference type="ChEBI" id="CHEBI:33738"/>
        <dbReference type="ChEBI" id="CHEBI:57586"/>
        <dbReference type="ChEBI" id="CHEBI:57844"/>
        <dbReference type="ChEBI" id="CHEBI:59789"/>
        <dbReference type="ChEBI" id="CHEBI:64428"/>
        <dbReference type="ChEBI" id="CHEBI:149473"/>
        <dbReference type="EC" id="2.8.1.6"/>
    </reaction>
</comment>
<comment type="cofactor">
    <cofactor evidence="1">
        <name>[4Fe-4S] cluster</name>
        <dbReference type="ChEBI" id="CHEBI:49883"/>
    </cofactor>
    <text evidence="1">Binds 1 [4Fe-4S] cluster. The cluster is coordinated with 3 cysteines and an exchangeable S-adenosyl-L-methionine.</text>
</comment>
<comment type="cofactor">
    <cofactor evidence="1">
        <name>[2Fe-2S] cluster</name>
        <dbReference type="ChEBI" id="CHEBI:190135"/>
    </cofactor>
    <text evidence="1">Binds 1 [2Fe-2S] cluster. The cluster is coordinated with 3 cysteines and 1 arginine.</text>
</comment>
<comment type="pathway">
    <text evidence="1">Cofactor biosynthesis; biotin biosynthesis; biotin from 7,8-diaminononanoate: step 2/2.</text>
</comment>
<comment type="subunit">
    <text evidence="1">Homodimer.</text>
</comment>
<comment type="similarity">
    <text evidence="1">Belongs to the radical SAM superfamily. Biotin synthase family.</text>
</comment>
<proteinExistence type="inferred from homology"/>
<sequence>MNSIAHSTLAAASPTIRHDWTREEAAAIYHAPFADLMFRAQTIHRQTFDPNQVQCNQLLNVKTGGCAEDCGYCSQSAHHDTALPASKLMEPAKVIEAAKAARDAGATRYCMGAAWRSPKERDMAPVIEMVKGVKALGMEACMTLGMLTDDQAKQLADAGLDYYNHNIDTSEEFYASVVKSRSFGDRLDTLEKVQDAGIKVCCGGILGLGEKPTDRVEMLRTLANLPQHPESVPINMLIPIEGTPIAKTATPVDPFEFVRTIALARIMMPKSDVRLAAGRTAMSDEMQALCFLAGANSIFIGDTLLTTPNPGDSKDRALFNRLGITPRDDLGVHAHS</sequence>
<keyword id="KW-0001">2Fe-2S</keyword>
<keyword id="KW-0004">4Fe-4S</keyword>
<keyword id="KW-0093">Biotin biosynthesis</keyword>
<keyword id="KW-0408">Iron</keyword>
<keyword id="KW-0411">Iron-sulfur</keyword>
<keyword id="KW-0479">Metal-binding</keyword>
<keyword id="KW-0949">S-adenosyl-L-methionine</keyword>
<keyword id="KW-0808">Transferase</keyword>
<protein>
    <recommendedName>
        <fullName evidence="1">Biotin synthase</fullName>
        <ecNumber evidence="1">2.8.1.6</ecNumber>
    </recommendedName>
</protein>